<geneLocation type="chloroplast"/>
<protein>
    <recommendedName>
        <fullName evidence="1">Small ribosomal subunit protein uS14c</fullName>
    </recommendedName>
    <alternativeName>
        <fullName evidence="2">30S ribosomal protein S14, chloroplastic</fullName>
    </alternativeName>
</protein>
<feature type="chain" id="PRO_0000354409" description="Small ribosomal subunit protein uS14c">
    <location>
        <begin position="1"/>
        <end position="100"/>
    </location>
</feature>
<gene>
    <name evidence="1" type="primary">rps14</name>
</gene>
<name>RR14_CRUWA</name>
<evidence type="ECO:0000255" key="1">
    <source>
        <dbReference type="HAMAP-Rule" id="MF_00537"/>
    </source>
</evidence>
<evidence type="ECO:0000305" key="2"/>
<accession>A4QKS9</accession>
<organism>
    <name type="scientific">Crucihimalaya wallichii</name>
    <name type="common">Rock-cress</name>
    <name type="synonym">Arabidopsis campestris</name>
    <dbReference type="NCBI Taxonomy" id="78192"/>
    <lineage>
        <taxon>Eukaryota</taxon>
        <taxon>Viridiplantae</taxon>
        <taxon>Streptophyta</taxon>
        <taxon>Embryophyta</taxon>
        <taxon>Tracheophyta</taxon>
        <taxon>Spermatophyta</taxon>
        <taxon>Magnoliopsida</taxon>
        <taxon>eudicotyledons</taxon>
        <taxon>Gunneridae</taxon>
        <taxon>Pentapetalae</taxon>
        <taxon>rosids</taxon>
        <taxon>malvids</taxon>
        <taxon>Brassicales</taxon>
        <taxon>Brassicaceae</taxon>
        <taxon>Crucihimalayeae</taxon>
        <taxon>Crucihimalaya</taxon>
    </lineage>
</organism>
<reference key="1">
    <citation type="submission" date="2007-03" db="EMBL/GenBank/DDBJ databases">
        <title>Sequencing analysis of Crucihimalaya wallichii chloroplast DNA.</title>
        <authorList>
            <person name="Hosouchi T."/>
            <person name="Tsuruoka H."/>
            <person name="Kotani H."/>
        </authorList>
    </citation>
    <scope>NUCLEOTIDE SEQUENCE [LARGE SCALE GENOMIC DNA]</scope>
</reference>
<sequence length="100" mass="11738">MAKKSLIYREKKRQKLEKKYHLIRRSSKKEISNIPSLSEKWKIHGKLQSPPRNSAPTRLHRRCFSTGRPRANYRDFGLSGHILREMVHACLLPGATRSSW</sequence>
<comment type="function">
    <text evidence="1">Binds 16S rRNA, required for the assembly of 30S particles.</text>
</comment>
<comment type="subunit">
    <text evidence="1">Part of the 30S ribosomal subunit.</text>
</comment>
<comment type="subcellular location">
    <subcellularLocation>
        <location>Plastid</location>
        <location>Chloroplast</location>
    </subcellularLocation>
</comment>
<comment type="similarity">
    <text evidence="1">Belongs to the universal ribosomal protein uS14 family.</text>
</comment>
<keyword id="KW-0150">Chloroplast</keyword>
<keyword id="KW-0934">Plastid</keyword>
<keyword id="KW-0687">Ribonucleoprotein</keyword>
<keyword id="KW-0689">Ribosomal protein</keyword>
<keyword id="KW-0694">RNA-binding</keyword>
<keyword id="KW-0699">rRNA-binding</keyword>
<dbReference type="EMBL" id="AP009372">
    <property type="protein sequence ID" value="BAF50284.1"/>
    <property type="molecule type" value="Genomic_DNA"/>
</dbReference>
<dbReference type="RefSeq" id="YP_001123460.1">
    <property type="nucleotide sequence ID" value="NC_009271.1"/>
</dbReference>
<dbReference type="SMR" id="A4QKS9"/>
<dbReference type="GeneID" id="4962728"/>
<dbReference type="GO" id="GO:0009507">
    <property type="term" value="C:chloroplast"/>
    <property type="evidence" value="ECO:0007669"/>
    <property type="project" value="UniProtKB-SubCell"/>
</dbReference>
<dbReference type="GO" id="GO:0015935">
    <property type="term" value="C:small ribosomal subunit"/>
    <property type="evidence" value="ECO:0007669"/>
    <property type="project" value="TreeGrafter"/>
</dbReference>
<dbReference type="GO" id="GO:0019843">
    <property type="term" value="F:rRNA binding"/>
    <property type="evidence" value="ECO:0007669"/>
    <property type="project" value="UniProtKB-UniRule"/>
</dbReference>
<dbReference type="GO" id="GO:0003735">
    <property type="term" value="F:structural constituent of ribosome"/>
    <property type="evidence" value="ECO:0007669"/>
    <property type="project" value="InterPro"/>
</dbReference>
<dbReference type="GO" id="GO:0006412">
    <property type="term" value="P:translation"/>
    <property type="evidence" value="ECO:0007669"/>
    <property type="project" value="UniProtKB-UniRule"/>
</dbReference>
<dbReference type="FunFam" id="1.10.287.1480:FF:000001">
    <property type="entry name" value="30S ribosomal protein S14"/>
    <property type="match status" value="1"/>
</dbReference>
<dbReference type="Gene3D" id="1.10.287.1480">
    <property type="match status" value="1"/>
</dbReference>
<dbReference type="HAMAP" id="MF_00537">
    <property type="entry name" value="Ribosomal_uS14_1"/>
    <property type="match status" value="1"/>
</dbReference>
<dbReference type="InterPro" id="IPR001209">
    <property type="entry name" value="Ribosomal_uS14"/>
</dbReference>
<dbReference type="InterPro" id="IPR023036">
    <property type="entry name" value="Ribosomal_uS14_bac/plastid"/>
</dbReference>
<dbReference type="InterPro" id="IPR018271">
    <property type="entry name" value="Ribosomal_uS14_CS"/>
</dbReference>
<dbReference type="NCBIfam" id="NF006477">
    <property type="entry name" value="PRK08881.1"/>
    <property type="match status" value="1"/>
</dbReference>
<dbReference type="PANTHER" id="PTHR19836">
    <property type="entry name" value="30S RIBOSOMAL PROTEIN S14"/>
    <property type="match status" value="1"/>
</dbReference>
<dbReference type="PANTHER" id="PTHR19836:SF19">
    <property type="entry name" value="SMALL RIBOSOMAL SUBUNIT PROTEIN US14M"/>
    <property type="match status" value="1"/>
</dbReference>
<dbReference type="Pfam" id="PF00253">
    <property type="entry name" value="Ribosomal_S14"/>
    <property type="match status" value="1"/>
</dbReference>
<dbReference type="SUPFAM" id="SSF57716">
    <property type="entry name" value="Glucocorticoid receptor-like (DNA-binding domain)"/>
    <property type="match status" value="1"/>
</dbReference>
<dbReference type="PROSITE" id="PS00527">
    <property type="entry name" value="RIBOSOMAL_S14"/>
    <property type="match status" value="1"/>
</dbReference>
<proteinExistence type="inferred from homology"/>